<keyword id="KW-0025">Alternative splicing</keyword>
<keyword id="KW-1267">Proteomics identification</keyword>
<keyword id="KW-1185">Reference proteome</keyword>
<keyword id="KW-0677">Repeat</keyword>
<keyword id="KW-0853">WD repeat</keyword>
<evidence type="ECO:0000255" key="1">
    <source>
        <dbReference type="PROSITE-ProRule" id="PRU00026"/>
    </source>
</evidence>
<evidence type="ECO:0000255" key="2">
    <source>
        <dbReference type="PROSITE-ProRule" id="PRU01119"/>
    </source>
</evidence>
<evidence type="ECO:0000303" key="3">
    <source>
    </source>
</evidence>
<evidence type="ECO:0000305" key="4"/>
<sequence length="917" mass="104372">MAFIRKKQQEQQLQLYSKERFSLLLLNLEEYYFEQHRANHILHKGSHHERKIRGSLKICSKSVIFEPDSISQPIIKIPLRDCIKIGKHGENGANRHFTKAKSGGISLIFSQVYFIKEHNVVAPYKIERGKMEYVFELDVPGKVEDVVETLLQLHRASCLDKLGDQTAMITAILQSRLARTSFDKNRFQNISEKLHMECKAEMVTPLVTNPGHVCITDTNLYFQPLNGYPKPVVQITLQDVRRIYKRRHGLMPLGLEVFCTEDDLCSDIYLKFYEPQDRDDLYFYIATYLEHHVAEHTAESYMLQWQRGHLSNYQYLLHLNNLADRSCNDLSQYPVFPWIIHDYSSSELDLSNPGTFRDLSKPVGALNKERLERLLTRYQEMPEPKFMYGSHYSSPGYVLFYLVRIAPEYMLCLQNGRFDNADRMFNSIAETWKNCLDGATDFKELIPEFYGDDVSFLVNSLKLDLGKRQGGQMVDDVELPPWASSPEDFLQKSKDALESNYVSEHLHEWIDLIFGYKQKGSDAVGAHNVFHPLTYEGGVDLNSIQDPDEKVAMLTQILEFGQTPKQLFVTPHPRRITPKFKSLSQTSSYNASMADSPGEESFEDLTEESKTLAWNNITKLQLHEHYKIHKEAVTGITVSRNGSSVFTTSQDSTLKMFSKESKMLQRSISFSNMALSSCLLLPGDATVITSSWDNNVYFYSIAFGRRQDTLMGHDDAVSKICWHDNRLYSASWDSTVKVWSGVPAEMPGTKRHHFDLLAELEHDVSVDTISLNAASTLLVSGTKEGTVNIWDLTTATLMHQIPCHSGIVCDTAFSPDSRHVLSTGTDGCLNVIDVQTGMLISSMTSDEPQRCFVWDGNSVLSGSQSGELLVWDLLGAKISERIQGHTGAVTCIWMNEQCSSIITGGEDRQIIFWKLQY</sequence>
<gene>
    <name type="primary">NSMAF</name>
    <name type="synonym">FAN</name>
</gene>
<feature type="chain" id="PRO_0000050975" description="Protein FAN">
    <location>
        <begin position="1"/>
        <end position="917"/>
    </location>
</feature>
<feature type="domain" description="GRAM">
    <location>
        <begin position="176"/>
        <end position="247"/>
    </location>
</feature>
<feature type="domain" description="BEACH-type PH" evidence="2">
    <location>
        <begin position="189"/>
        <end position="286"/>
    </location>
</feature>
<feature type="domain" description="BEACH" evidence="1">
    <location>
        <begin position="290"/>
        <end position="575"/>
    </location>
</feature>
<feature type="repeat" description="WD 1">
    <location>
        <begin position="628"/>
        <end position="658"/>
    </location>
</feature>
<feature type="repeat" description="WD 2">
    <location>
        <begin position="670"/>
        <end position="700"/>
    </location>
</feature>
<feature type="repeat" description="WD 3">
    <location>
        <begin position="712"/>
        <end position="740"/>
    </location>
</feature>
<feature type="repeat" description="WD 4">
    <location>
        <begin position="761"/>
        <end position="791"/>
    </location>
</feature>
<feature type="repeat" description="WD 5">
    <location>
        <begin position="803"/>
        <end position="833"/>
    </location>
</feature>
<feature type="repeat" description="WD 6">
    <location>
        <begin position="884"/>
        <end position="914"/>
    </location>
</feature>
<feature type="splice variant" id="VSP_042036" description="In isoform 2." evidence="3">
    <original>MAFIRKKQQEQQLQLYSKER</original>
    <variation>MTGQARFHRGAEACRAIRQCRSRRPRAAHPEGRAGSGRGSRHASPGVRRGG</variation>
    <location>
        <begin position="1"/>
        <end position="20"/>
    </location>
</feature>
<feature type="sequence variant" id="VAR_047023" description="In dbSNP:rs2228505.">
    <original>Y</original>
    <variation>C</variation>
    <location>
        <position position="626"/>
    </location>
</feature>
<feature type="sequence conflict" description="In Ref. 2; BAG57371." evidence="4" ref="2">
    <original>T</original>
    <variation>A</variation>
    <location>
        <position position="218"/>
    </location>
</feature>
<reference key="1">
    <citation type="journal article" date="1996" name="Cell">
        <title>FAN, a novel WD-repeat protein, couples the p55 TNF-receptor to neutral sphingomyelinase.</title>
        <authorList>
            <person name="Adam-Klages S."/>
            <person name="Adam D."/>
            <person name="Wiegmann K."/>
            <person name="Struve S."/>
            <person name="Kolanus W."/>
            <person name="Schneider-Mergener J."/>
            <person name="Kroenke M."/>
        </authorList>
    </citation>
    <scope>NUCLEOTIDE SEQUENCE [MRNA]</scope>
    <scope>VARIANT THR-850 (ISOFORM 1)</scope>
    <source>
        <tissue>Muscle</tissue>
    </source>
</reference>
<reference key="2">
    <citation type="journal article" date="2004" name="Nat. Genet.">
        <title>Complete sequencing and characterization of 21,243 full-length human cDNAs.</title>
        <authorList>
            <person name="Ota T."/>
            <person name="Suzuki Y."/>
            <person name="Nishikawa T."/>
            <person name="Otsuki T."/>
            <person name="Sugiyama T."/>
            <person name="Irie R."/>
            <person name="Wakamatsu A."/>
            <person name="Hayashi K."/>
            <person name="Sato H."/>
            <person name="Nagai K."/>
            <person name="Kimura K."/>
            <person name="Makita H."/>
            <person name="Sekine M."/>
            <person name="Obayashi M."/>
            <person name="Nishi T."/>
            <person name="Shibahara T."/>
            <person name="Tanaka T."/>
            <person name="Ishii S."/>
            <person name="Yamamoto J."/>
            <person name="Saito K."/>
            <person name="Kawai Y."/>
            <person name="Isono Y."/>
            <person name="Nakamura Y."/>
            <person name="Nagahari K."/>
            <person name="Murakami K."/>
            <person name="Yasuda T."/>
            <person name="Iwayanagi T."/>
            <person name="Wagatsuma M."/>
            <person name="Shiratori A."/>
            <person name="Sudo H."/>
            <person name="Hosoiri T."/>
            <person name="Kaku Y."/>
            <person name="Kodaira H."/>
            <person name="Kondo H."/>
            <person name="Sugawara M."/>
            <person name="Takahashi M."/>
            <person name="Kanda K."/>
            <person name="Yokoi T."/>
            <person name="Furuya T."/>
            <person name="Kikkawa E."/>
            <person name="Omura Y."/>
            <person name="Abe K."/>
            <person name="Kamihara K."/>
            <person name="Katsuta N."/>
            <person name="Sato K."/>
            <person name="Tanikawa M."/>
            <person name="Yamazaki M."/>
            <person name="Ninomiya K."/>
            <person name="Ishibashi T."/>
            <person name="Yamashita H."/>
            <person name="Murakawa K."/>
            <person name="Fujimori K."/>
            <person name="Tanai H."/>
            <person name="Kimata M."/>
            <person name="Watanabe M."/>
            <person name="Hiraoka S."/>
            <person name="Chiba Y."/>
            <person name="Ishida S."/>
            <person name="Ono Y."/>
            <person name="Takiguchi S."/>
            <person name="Watanabe S."/>
            <person name="Yosida M."/>
            <person name="Hotuta T."/>
            <person name="Kusano J."/>
            <person name="Kanehori K."/>
            <person name="Takahashi-Fujii A."/>
            <person name="Hara H."/>
            <person name="Tanase T.-O."/>
            <person name="Nomura Y."/>
            <person name="Togiya S."/>
            <person name="Komai F."/>
            <person name="Hara R."/>
            <person name="Takeuchi K."/>
            <person name="Arita M."/>
            <person name="Imose N."/>
            <person name="Musashino K."/>
            <person name="Yuuki H."/>
            <person name="Oshima A."/>
            <person name="Sasaki N."/>
            <person name="Aotsuka S."/>
            <person name="Yoshikawa Y."/>
            <person name="Matsunawa H."/>
            <person name="Ichihara T."/>
            <person name="Shiohata N."/>
            <person name="Sano S."/>
            <person name="Moriya S."/>
            <person name="Momiyama H."/>
            <person name="Satoh N."/>
            <person name="Takami S."/>
            <person name="Terashima Y."/>
            <person name="Suzuki O."/>
            <person name="Nakagawa S."/>
            <person name="Senoh A."/>
            <person name="Mizoguchi H."/>
            <person name="Goto Y."/>
            <person name="Shimizu F."/>
            <person name="Wakebe H."/>
            <person name="Hishigaki H."/>
            <person name="Watanabe T."/>
            <person name="Sugiyama A."/>
            <person name="Takemoto M."/>
            <person name="Kawakami B."/>
            <person name="Yamazaki M."/>
            <person name="Watanabe K."/>
            <person name="Kumagai A."/>
            <person name="Itakura S."/>
            <person name="Fukuzumi Y."/>
            <person name="Fujimori Y."/>
            <person name="Komiyama M."/>
            <person name="Tashiro H."/>
            <person name="Tanigami A."/>
            <person name="Fujiwara T."/>
            <person name="Ono T."/>
            <person name="Yamada K."/>
            <person name="Fujii Y."/>
            <person name="Ozaki K."/>
            <person name="Hirao M."/>
            <person name="Ohmori Y."/>
            <person name="Kawabata A."/>
            <person name="Hikiji T."/>
            <person name="Kobatake N."/>
            <person name="Inagaki H."/>
            <person name="Ikema Y."/>
            <person name="Okamoto S."/>
            <person name="Okitani R."/>
            <person name="Kawakami T."/>
            <person name="Noguchi S."/>
            <person name="Itoh T."/>
            <person name="Shigeta K."/>
            <person name="Senba T."/>
            <person name="Matsumura K."/>
            <person name="Nakajima Y."/>
            <person name="Mizuno T."/>
            <person name="Morinaga M."/>
            <person name="Sasaki M."/>
            <person name="Togashi T."/>
            <person name="Oyama M."/>
            <person name="Hata H."/>
            <person name="Watanabe M."/>
            <person name="Komatsu T."/>
            <person name="Mizushima-Sugano J."/>
            <person name="Satoh T."/>
            <person name="Shirai Y."/>
            <person name="Takahashi Y."/>
            <person name="Nakagawa K."/>
            <person name="Okumura K."/>
            <person name="Nagase T."/>
            <person name="Nomura N."/>
            <person name="Kikuchi H."/>
            <person name="Masuho Y."/>
            <person name="Yamashita R."/>
            <person name="Nakai K."/>
            <person name="Yada T."/>
            <person name="Nakamura Y."/>
            <person name="Ohara O."/>
            <person name="Isogai T."/>
            <person name="Sugano S."/>
        </authorList>
    </citation>
    <scope>NUCLEOTIDE SEQUENCE [LARGE SCALE MRNA] (ISOFORM 2)</scope>
    <source>
        <tissue>Cerebellum</tissue>
    </source>
</reference>
<reference key="3">
    <citation type="journal article" date="2006" name="Nature">
        <title>DNA sequence and analysis of human chromosome 8.</title>
        <authorList>
            <person name="Nusbaum C."/>
            <person name="Mikkelsen T.S."/>
            <person name="Zody M.C."/>
            <person name="Asakawa S."/>
            <person name="Taudien S."/>
            <person name="Garber M."/>
            <person name="Kodira C.D."/>
            <person name="Schueler M.G."/>
            <person name="Shimizu A."/>
            <person name="Whittaker C.A."/>
            <person name="Chang J.L."/>
            <person name="Cuomo C.A."/>
            <person name="Dewar K."/>
            <person name="FitzGerald M.G."/>
            <person name="Yang X."/>
            <person name="Allen N.R."/>
            <person name="Anderson S."/>
            <person name="Asakawa T."/>
            <person name="Blechschmidt K."/>
            <person name="Bloom T."/>
            <person name="Borowsky M.L."/>
            <person name="Butler J."/>
            <person name="Cook A."/>
            <person name="Corum B."/>
            <person name="DeArellano K."/>
            <person name="DeCaprio D."/>
            <person name="Dooley K.T."/>
            <person name="Dorris L. III"/>
            <person name="Engels R."/>
            <person name="Gloeckner G."/>
            <person name="Hafez N."/>
            <person name="Hagopian D.S."/>
            <person name="Hall J.L."/>
            <person name="Ishikawa S.K."/>
            <person name="Jaffe D.B."/>
            <person name="Kamat A."/>
            <person name="Kudoh J."/>
            <person name="Lehmann R."/>
            <person name="Lokitsang T."/>
            <person name="Macdonald P."/>
            <person name="Major J.E."/>
            <person name="Matthews C.D."/>
            <person name="Mauceli E."/>
            <person name="Menzel U."/>
            <person name="Mihalev A.H."/>
            <person name="Minoshima S."/>
            <person name="Murayama Y."/>
            <person name="Naylor J.W."/>
            <person name="Nicol R."/>
            <person name="Nguyen C."/>
            <person name="O'Leary S.B."/>
            <person name="O'Neill K."/>
            <person name="Parker S.C.J."/>
            <person name="Polley A."/>
            <person name="Raymond C.K."/>
            <person name="Reichwald K."/>
            <person name="Rodriguez J."/>
            <person name="Sasaki T."/>
            <person name="Schilhabel M."/>
            <person name="Siddiqui R."/>
            <person name="Smith C.L."/>
            <person name="Sneddon T.P."/>
            <person name="Talamas J.A."/>
            <person name="Tenzin P."/>
            <person name="Topham K."/>
            <person name="Venkataraman V."/>
            <person name="Wen G."/>
            <person name="Yamazaki S."/>
            <person name="Young S.K."/>
            <person name="Zeng Q."/>
            <person name="Zimmer A.R."/>
            <person name="Rosenthal A."/>
            <person name="Birren B.W."/>
            <person name="Platzer M."/>
            <person name="Shimizu N."/>
            <person name="Lander E.S."/>
        </authorList>
    </citation>
    <scope>NUCLEOTIDE SEQUENCE [LARGE SCALE GENOMIC DNA]</scope>
</reference>
<reference key="4">
    <citation type="submission" date="2005-07" db="EMBL/GenBank/DDBJ databases">
        <authorList>
            <person name="Mural R.J."/>
            <person name="Istrail S."/>
            <person name="Sutton G.G."/>
            <person name="Florea L."/>
            <person name="Halpern A.L."/>
            <person name="Mobarry C.M."/>
            <person name="Lippert R."/>
            <person name="Walenz B."/>
            <person name="Shatkay H."/>
            <person name="Dew I."/>
            <person name="Miller J.R."/>
            <person name="Flanigan M.J."/>
            <person name="Edwards N.J."/>
            <person name="Bolanos R."/>
            <person name="Fasulo D."/>
            <person name="Halldorsson B.V."/>
            <person name="Hannenhalli S."/>
            <person name="Turner R."/>
            <person name="Yooseph S."/>
            <person name="Lu F."/>
            <person name="Nusskern D.R."/>
            <person name="Shue B.C."/>
            <person name="Zheng X.H."/>
            <person name="Zhong F."/>
            <person name="Delcher A.L."/>
            <person name="Huson D.H."/>
            <person name="Kravitz S.A."/>
            <person name="Mouchard L."/>
            <person name="Reinert K."/>
            <person name="Remington K.A."/>
            <person name="Clark A.G."/>
            <person name="Waterman M.S."/>
            <person name="Eichler E.E."/>
            <person name="Adams M.D."/>
            <person name="Hunkapiller M.W."/>
            <person name="Myers E.W."/>
            <person name="Venter J.C."/>
        </authorList>
    </citation>
    <scope>NUCLEOTIDE SEQUENCE [LARGE SCALE GENOMIC DNA]</scope>
</reference>
<reference key="5">
    <citation type="journal article" date="2004" name="Genome Res.">
        <title>The status, quality, and expansion of the NIH full-length cDNA project: the Mammalian Gene Collection (MGC).</title>
        <authorList>
            <consortium name="The MGC Project Team"/>
        </authorList>
    </citation>
    <scope>NUCLEOTIDE SEQUENCE [LARGE SCALE MRNA] (ISOFORM 1)</scope>
    <source>
        <tissue>Uterus</tissue>
    </source>
</reference>
<proteinExistence type="evidence at protein level"/>
<dbReference type="EMBL" id="X96586">
    <property type="protein sequence ID" value="CAA65405.1"/>
    <property type="molecule type" value="mRNA"/>
</dbReference>
<dbReference type="EMBL" id="AK294009">
    <property type="protein sequence ID" value="BAG57371.1"/>
    <property type="molecule type" value="mRNA"/>
</dbReference>
<dbReference type="EMBL" id="AC068522">
    <property type="status" value="NOT_ANNOTATED_CDS"/>
    <property type="molecule type" value="Genomic_DNA"/>
</dbReference>
<dbReference type="EMBL" id="AC092700">
    <property type="status" value="NOT_ANNOTATED_CDS"/>
    <property type="molecule type" value="Genomic_DNA"/>
</dbReference>
<dbReference type="EMBL" id="CH471068">
    <property type="protein sequence ID" value="EAW86817.1"/>
    <property type="molecule type" value="Genomic_DNA"/>
</dbReference>
<dbReference type="EMBL" id="BC041124">
    <property type="protein sequence ID" value="AAH41124.1"/>
    <property type="molecule type" value="mRNA"/>
</dbReference>
<dbReference type="CCDS" id="CCDS47864.1">
    <molecule id="Q92636-2"/>
</dbReference>
<dbReference type="CCDS" id="CCDS6173.1">
    <molecule id="Q92636-1"/>
</dbReference>
<dbReference type="RefSeq" id="NP_001138244.1">
    <molecule id="Q92636-2"/>
    <property type="nucleotide sequence ID" value="NM_001144772.1"/>
</dbReference>
<dbReference type="RefSeq" id="NP_003571.2">
    <molecule id="Q92636-1"/>
    <property type="nucleotide sequence ID" value="NM_003580.3"/>
</dbReference>
<dbReference type="SMR" id="Q92636"/>
<dbReference type="BioGRID" id="114019">
    <property type="interactions" value="43"/>
</dbReference>
<dbReference type="DIP" id="DIP-44106N"/>
<dbReference type="FunCoup" id="Q92636">
    <property type="interactions" value="2223"/>
</dbReference>
<dbReference type="IntAct" id="Q92636">
    <property type="interactions" value="42"/>
</dbReference>
<dbReference type="MINT" id="Q92636"/>
<dbReference type="STRING" id="9606.ENSP00000411012"/>
<dbReference type="GlyGen" id="Q92636">
    <property type="glycosylation" value="1 site, 1 O-linked glycan (1 site)"/>
</dbReference>
<dbReference type="iPTMnet" id="Q92636"/>
<dbReference type="PhosphoSitePlus" id="Q92636"/>
<dbReference type="BioMuta" id="NSMAF"/>
<dbReference type="DMDM" id="209572614"/>
<dbReference type="jPOST" id="Q92636"/>
<dbReference type="MassIVE" id="Q92636"/>
<dbReference type="PaxDb" id="9606-ENSP00000411012"/>
<dbReference type="PeptideAtlas" id="Q92636"/>
<dbReference type="ProteomicsDB" id="75390">
    <molecule id="Q92636-1"/>
</dbReference>
<dbReference type="ProteomicsDB" id="75391">
    <molecule id="Q92636-2"/>
</dbReference>
<dbReference type="Pumba" id="Q92636"/>
<dbReference type="Antibodypedia" id="11802">
    <property type="antibodies" value="120 antibodies from 25 providers"/>
</dbReference>
<dbReference type="DNASU" id="8439"/>
<dbReference type="Ensembl" id="ENST00000038176.8">
    <molecule id="Q92636-1"/>
    <property type="protein sequence ID" value="ENSP00000038176.3"/>
    <property type="gene ID" value="ENSG00000035681.10"/>
</dbReference>
<dbReference type="Ensembl" id="ENST00000427130.7">
    <molecule id="Q92636-2"/>
    <property type="protein sequence ID" value="ENSP00000411012.2"/>
    <property type="gene ID" value="ENSG00000035681.10"/>
</dbReference>
<dbReference type="GeneID" id="8439"/>
<dbReference type="KEGG" id="hsa:8439"/>
<dbReference type="MANE-Select" id="ENST00000038176.8">
    <property type="protein sequence ID" value="ENSP00000038176.3"/>
    <property type="RefSeq nucleotide sequence ID" value="NM_003580.4"/>
    <property type="RefSeq protein sequence ID" value="NP_003571.2"/>
</dbReference>
<dbReference type="UCSC" id="uc003xtt.4">
    <molecule id="Q92636-1"/>
    <property type="organism name" value="human"/>
</dbReference>
<dbReference type="AGR" id="HGNC:8017"/>
<dbReference type="CTD" id="8439"/>
<dbReference type="DisGeNET" id="8439"/>
<dbReference type="GeneCards" id="NSMAF"/>
<dbReference type="HGNC" id="HGNC:8017">
    <property type="gene designation" value="NSMAF"/>
</dbReference>
<dbReference type="HPA" id="ENSG00000035681">
    <property type="expression patterns" value="Low tissue specificity"/>
</dbReference>
<dbReference type="MIM" id="603043">
    <property type="type" value="gene"/>
</dbReference>
<dbReference type="neXtProt" id="NX_Q92636"/>
<dbReference type="OpenTargets" id="ENSG00000035681"/>
<dbReference type="PharmGKB" id="PA31795"/>
<dbReference type="VEuPathDB" id="HostDB:ENSG00000035681"/>
<dbReference type="eggNOG" id="KOG1786">
    <property type="taxonomic scope" value="Eukaryota"/>
</dbReference>
<dbReference type="GeneTree" id="ENSGT00940000155059"/>
<dbReference type="HOGENOM" id="CLU_000218_5_2_1"/>
<dbReference type="InParanoid" id="Q92636"/>
<dbReference type="OMA" id="QVYKRRY"/>
<dbReference type="OrthoDB" id="26681at2759"/>
<dbReference type="PAN-GO" id="Q92636">
    <property type="GO annotations" value="0 GO annotations based on evolutionary models"/>
</dbReference>
<dbReference type="PhylomeDB" id="Q92636"/>
<dbReference type="TreeFam" id="TF324912"/>
<dbReference type="PathwayCommons" id="Q92636"/>
<dbReference type="Reactome" id="R-HSA-5626978">
    <property type="pathway name" value="TNFR1-mediated ceramide production"/>
</dbReference>
<dbReference type="SignaLink" id="Q92636"/>
<dbReference type="BioGRID-ORCS" id="8439">
    <property type="hits" value="7 hits in 1148 CRISPR screens"/>
</dbReference>
<dbReference type="ChiTaRS" id="NSMAF">
    <property type="organism name" value="human"/>
</dbReference>
<dbReference type="GenomeRNAi" id="8439"/>
<dbReference type="Pharos" id="Q92636">
    <property type="development level" value="Tbio"/>
</dbReference>
<dbReference type="PRO" id="PR:Q92636"/>
<dbReference type="Proteomes" id="UP000005640">
    <property type="component" value="Chromosome 8"/>
</dbReference>
<dbReference type="RNAct" id="Q92636">
    <property type="molecule type" value="protein"/>
</dbReference>
<dbReference type="Bgee" id="ENSG00000035681">
    <property type="expression patterns" value="Expressed in gingival epithelium and 202 other cell types or tissues"/>
</dbReference>
<dbReference type="ExpressionAtlas" id="Q92636">
    <property type="expression patterns" value="baseline and differential"/>
</dbReference>
<dbReference type="GO" id="GO:0005737">
    <property type="term" value="C:cytoplasm"/>
    <property type="evidence" value="ECO:0000304"/>
    <property type="project" value="ProtInc"/>
</dbReference>
<dbReference type="GO" id="GO:0005829">
    <property type="term" value="C:cytosol"/>
    <property type="evidence" value="ECO:0000304"/>
    <property type="project" value="Reactome"/>
</dbReference>
<dbReference type="GO" id="GO:0016020">
    <property type="term" value="C:membrane"/>
    <property type="evidence" value="ECO:0007669"/>
    <property type="project" value="GOC"/>
</dbReference>
<dbReference type="GO" id="GO:0006672">
    <property type="term" value="P:ceramide metabolic process"/>
    <property type="evidence" value="ECO:0000304"/>
    <property type="project" value="ProtInc"/>
</dbReference>
<dbReference type="GO" id="GO:0034250">
    <property type="term" value="P:positive regulation of amide metabolic process"/>
    <property type="evidence" value="ECO:0007669"/>
    <property type="project" value="Ensembl"/>
</dbReference>
<dbReference type="GO" id="GO:0045834">
    <property type="term" value="P:positive regulation of lipid metabolic process"/>
    <property type="evidence" value="ECO:0007669"/>
    <property type="project" value="Ensembl"/>
</dbReference>
<dbReference type="GO" id="GO:1905038">
    <property type="term" value="P:regulation of membrane lipid metabolic process"/>
    <property type="evidence" value="ECO:0007669"/>
    <property type="project" value="Ensembl"/>
</dbReference>
<dbReference type="GO" id="GO:0007165">
    <property type="term" value="P:signal transduction"/>
    <property type="evidence" value="ECO:0000304"/>
    <property type="project" value="ProtInc"/>
</dbReference>
<dbReference type="GO" id="GO:0033209">
    <property type="term" value="P:tumor necrosis factor-mediated signaling pathway"/>
    <property type="evidence" value="ECO:0007669"/>
    <property type="project" value="Ensembl"/>
</dbReference>
<dbReference type="CDD" id="cd06071">
    <property type="entry name" value="Beach"/>
    <property type="match status" value="1"/>
</dbReference>
<dbReference type="CDD" id="cd00200">
    <property type="entry name" value="WD40"/>
    <property type="match status" value="1"/>
</dbReference>
<dbReference type="FunFam" id="1.10.1540.10:FF:000001">
    <property type="entry name" value="neurobeachin isoform X1"/>
    <property type="match status" value="1"/>
</dbReference>
<dbReference type="FunFam" id="2.30.29.30:FF:000367">
    <property type="entry name" value="Neutral sphingomyelinase activation associated factor"/>
    <property type="match status" value="1"/>
</dbReference>
<dbReference type="FunFam" id="2.130.10.10:FF:000336">
    <property type="entry name" value="Neutral sphingomyelinase activation-associated factor"/>
    <property type="match status" value="1"/>
</dbReference>
<dbReference type="FunFam" id="2.130.10.10:FF:002193">
    <property type="entry name" value="Neutral sphingomyelinase activation-associated factor"/>
    <property type="match status" value="1"/>
</dbReference>
<dbReference type="Gene3D" id="1.10.1540.10">
    <property type="entry name" value="BEACH domain"/>
    <property type="match status" value="1"/>
</dbReference>
<dbReference type="Gene3D" id="2.30.29.30">
    <property type="entry name" value="Pleckstrin-homology domain (PH domain)/Phosphotyrosine-binding domain (PTB)"/>
    <property type="match status" value="1"/>
</dbReference>
<dbReference type="Gene3D" id="2.130.10.10">
    <property type="entry name" value="YVTN repeat-like/Quinoprotein amine dehydrogenase"/>
    <property type="match status" value="3"/>
</dbReference>
<dbReference type="InterPro" id="IPR000409">
    <property type="entry name" value="BEACH_dom"/>
</dbReference>
<dbReference type="InterPro" id="IPR036372">
    <property type="entry name" value="BEACH_dom_sf"/>
</dbReference>
<dbReference type="InterPro" id="IPR050865">
    <property type="entry name" value="BEACH_Domain"/>
</dbReference>
<dbReference type="InterPro" id="IPR004182">
    <property type="entry name" value="GRAM"/>
</dbReference>
<dbReference type="InterPro" id="IPR023362">
    <property type="entry name" value="PH-BEACH_dom"/>
</dbReference>
<dbReference type="InterPro" id="IPR011993">
    <property type="entry name" value="PH-like_dom_sf"/>
</dbReference>
<dbReference type="InterPro" id="IPR015943">
    <property type="entry name" value="WD40/YVTN_repeat-like_dom_sf"/>
</dbReference>
<dbReference type="InterPro" id="IPR036322">
    <property type="entry name" value="WD40_repeat_dom_sf"/>
</dbReference>
<dbReference type="InterPro" id="IPR001680">
    <property type="entry name" value="WD40_rpt"/>
</dbReference>
<dbReference type="PANTHER" id="PTHR13743">
    <property type="entry name" value="BEIGE/BEACH-RELATED"/>
    <property type="match status" value="1"/>
</dbReference>
<dbReference type="PANTHER" id="PTHR13743:SF123">
    <property type="entry name" value="PROTEIN FAN"/>
    <property type="match status" value="1"/>
</dbReference>
<dbReference type="Pfam" id="PF02138">
    <property type="entry name" value="Beach"/>
    <property type="match status" value="1"/>
</dbReference>
<dbReference type="Pfam" id="PF02893">
    <property type="entry name" value="GRAM"/>
    <property type="match status" value="1"/>
</dbReference>
<dbReference type="Pfam" id="PF25400">
    <property type="entry name" value="PH_FAN"/>
    <property type="match status" value="1"/>
</dbReference>
<dbReference type="Pfam" id="PF00400">
    <property type="entry name" value="WD40"/>
    <property type="match status" value="5"/>
</dbReference>
<dbReference type="SMART" id="SM01026">
    <property type="entry name" value="Beach"/>
    <property type="match status" value="1"/>
</dbReference>
<dbReference type="SMART" id="SM00568">
    <property type="entry name" value="GRAM"/>
    <property type="match status" value="1"/>
</dbReference>
<dbReference type="SMART" id="SM00320">
    <property type="entry name" value="WD40"/>
    <property type="match status" value="7"/>
</dbReference>
<dbReference type="SUPFAM" id="SSF81837">
    <property type="entry name" value="BEACH domain"/>
    <property type="match status" value="1"/>
</dbReference>
<dbReference type="SUPFAM" id="SSF50729">
    <property type="entry name" value="PH domain-like"/>
    <property type="match status" value="1"/>
</dbReference>
<dbReference type="SUPFAM" id="SSF50978">
    <property type="entry name" value="WD40 repeat-like"/>
    <property type="match status" value="1"/>
</dbReference>
<dbReference type="PROSITE" id="PS50197">
    <property type="entry name" value="BEACH"/>
    <property type="match status" value="1"/>
</dbReference>
<dbReference type="PROSITE" id="PS51783">
    <property type="entry name" value="PH_BEACH"/>
    <property type="match status" value="1"/>
</dbReference>
<dbReference type="PROSITE" id="PS50082">
    <property type="entry name" value="WD_REPEATS_2"/>
    <property type="match status" value="4"/>
</dbReference>
<dbReference type="PROSITE" id="PS50294">
    <property type="entry name" value="WD_REPEATS_REGION"/>
    <property type="match status" value="1"/>
</dbReference>
<protein>
    <recommendedName>
        <fullName>Protein FAN</fullName>
    </recommendedName>
    <alternativeName>
        <fullName>Factor associated with neutral sphingomyelinase activation</fullName>
        <shortName>Factor associated with N-SMase activation</shortName>
    </alternativeName>
</protein>
<name>FAN_HUMAN</name>
<comment type="function">
    <text>Couples the p55 TNF-receptor (TNF-R55 / TNFR1) to neutral sphingomyelinase (N-SMASE). Specifically binds to the N-smase activation domain of TNF-R55. May regulate ceramide production by N-SMASE.</text>
</comment>
<comment type="interaction">
    <interactant intactId="EBI-2947053">
        <id>Q92636</id>
    </interactant>
    <interactant intactId="EBI-353944">
        <id>P60709</id>
        <label>ACTB</label>
    </interactant>
    <organismsDiffer>false</organismsDiffer>
    <experiments>2</experiments>
</comment>
<comment type="interaction">
    <interactant intactId="EBI-2947053">
        <id>Q92636</id>
    </interactant>
    <interactant intactId="EBI-374238">
        <id>Q9NPI6</id>
        <label>DCP1A</label>
    </interactant>
    <organismsDiffer>false</organismsDiffer>
    <experiments>2</experiments>
</comment>
<comment type="interaction">
    <interactant intactId="EBI-2947053">
        <id>Q92636</id>
    </interactant>
    <interactant intactId="EBI-521595">
        <id>Q8IZD4</id>
        <label>DCP1B</label>
    </interactant>
    <organismsDiffer>false</organismsDiffer>
    <experiments>2</experiments>
</comment>
<comment type="interaction">
    <interactant intactId="EBI-2947053">
        <id>Q92636</id>
    </interactant>
    <interactant intactId="EBI-712001">
        <id>O95166</id>
        <label>GABARAP</label>
    </interactant>
    <organismsDiffer>false</organismsDiffer>
    <experiments>2</experiments>
</comment>
<comment type="interaction">
    <interactant intactId="EBI-2947053">
        <id>Q92636</id>
    </interactant>
    <interactant intactId="EBI-746969">
        <id>Q9H0R8</id>
        <label>GABARAPL1</label>
    </interactant>
    <organismsDiffer>false</organismsDiffer>
    <experiments>8</experiments>
</comment>
<comment type="interaction">
    <interactant intactId="EBI-2947053">
        <id>Q92636</id>
    </interactant>
    <interactant intactId="EBI-748201">
        <id>P50552</id>
        <label>VASP</label>
    </interactant>
    <organismsDiffer>false</organismsDiffer>
    <experiments>2</experiments>
</comment>
<comment type="interaction">
    <interactant intactId="EBI-2947053">
        <id>Q92636</id>
    </interactant>
    <interactant intactId="EBI-7786643">
        <id>Q9SJF3</id>
        <label>At1g08370</label>
    </interactant>
    <organismsDiffer>true</organismsDiffer>
    <experiments>2</experiments>
</comment>
<comment type="alternative products">
    <event type="alternative splicing"/>
    <isoform>
        <id>Q92636-1</id>
        <name>1</name>
        <sequence type="displayed"/>
    </isoform>
    <isoform>
        <id>Q92636-2</id>
        <name>2</name>
        <sequence type="described" ref="VSP_042036"/>
    </isoform>
</comment>
<comment type="tissue specificity">
    <text>Ubiquitous.</text>
</comment>
<organism>
    <name type="scientific">Homo sapiens</name>
    <name type="common">Human</name>
    <dbReference type="NCBI Taxonomy" id="9606"/>
    <lineage>
        <taxon>Eukaryota</taxon>
        <taxon>Metazoa</taxon>
        <taxon>Chordata</taxon>
        <taxon>Craniata</taxon>
        <taxon>Vertebrata</taxon>
        <taxon>Euteleostomi</taxon>
        <taxon>Mammalia</taxon>
        <taxon>Eutheria</taxon>
        <taxon>Euarchontoglires</taxon>
        <taxon>Primates</taxon>
        <taxon>Haplorrhini</taxon>
        <taxon>Catarrhini</taxon>
        <taxon>Hominidae</taxon>
        <taxon>Homo</taxon>
    </lineage>
</organism>
<accession>Q92636</accession>
<accession>B4DFB0</accession>
<accession>E9PCH0</accession>
<accession>Q8IW26</accession>